<comment type="function">
    <text evidence="1">PsaA and PsaB bind P700, the primary electron donor of photosystem I (PSI), as well as the electron acceptors A0, A1 and FX. PSI is a plastocyanin-ferredoxin oxidoreductase, converting photonic excitation into a charge separation, which transfers an electron from the donor P700 chlorophyll pair to the spectroscopically characterized acceptors A0, A1, FX, FA and FB in turn. Oxidized P700 is reduced on the lumenal side of the thylakoid membrane by plastocyanin.</text>
</comment>
<comment type="catalytic activity">
    <reaction evidence="1">
        <text>reduced [plastocyanin] + hnu + oxidized [2Fe-2S]-[ferredoxin] = oxidized [plastocyanin] + reduced [2Fe-2S]-[ferredoxin]</text>
        <dbReference type="Rhea" id="RHEA:30407"/>
        <dbReference type="Rhea" id="RHEA-COMP:10000"/>
        <dbReference type="Rhea" id="RHEA-COMP:10001"/>
        <dbReference type="Rhea" id="RHEA-COMP:10039"/>
        <dbReference type="Rhea" id="RHEA-COMP:10040"/>
        <dbReference type="ChEBI" id="CHEBI:29036"/>
        <dbReference type="ChEBI" id="CHEBI:30212"/>
        <dbReference type="ChEBI" id="CHEBI:33737"/>
        <dbReference type="ChEBI" id="CHEBI:33738"/>
        <dbReference type="ChEBI" id="CHEBI:49552"/>
        <dbReference type="EC" id="1.97.1.12"/>
    </reaction>
</comment>
<comment type="cofactor">
    <text evidence="1">P700 is a chlorophyll a/chlorophyll a' dimer, A0 is one or more chlorophyll a, A1 is one or both phylloquinones and FX is a shared 4Fe-4S iron-sulfur center.</text>
</comment>
<comment type="subunit">
    <text evidence="1">The PsaA/B heterodimer binds the P700 chlorophyll special pair and subsequent electron acceptors. PSI consists of a core antenna complex that captures photons, and an electron transfer chain that converts photonic excitation into a charge separation. The eukaryotic PSI reaction center is composed of at least 11 subunits.</text>
</comment>
<comment type="subcellular location">
    <subcellularLocation>
        <location evidence="1">Plastid</location>
        <location evidence="1">Chloroplast thylakoid membrane</location>
        <topology evidence="1">Multi-pass membrane protein</topology>
    </subcellularLocation>
</comment>
<comment type="similarity">
    <text evidence="1">Belongs to the PsaA/PsaB family.</text>
</comment>
<dbReference type="EC" id="1.97.1.12" evidence="1"/>
<dbReference type="EMBL" id="X84153">
    <property type="protein sequence ID" value="CAA58958.1"/>
    <property type="molecule type" value="Genomic_DNA"/>
</dbReference>
<dbReference type="EMBL" id="X84152">
    <property type="protein sequence ID" value="CAA58957.1"/>
    <property type="molecule type" value="Genomic_DNA"/>
</dbReference>
<dbReference type="PIR" id="S60184">
    <property type="entry name" value="S60184"/>
</dbReference>
<dbReference type="SMR" id="Q33332"/>
<dbReference type="GO" id="GO:0009535">
    <property type="term" value="C:chloroplast thylakoid membrane"/>
    <property type="evidence" value="ECO:0007669"/>
    <property type="project" value="UniProtKB-SubCell"/>
</dbReference>
<dbReference type="GO" id="GO:0009522">
    <property type="term" value="C:photosystem I"/>
    <property type="evidence" value="ECO:0007669"/>
    <property type="project" value="UniProtKB-KW"/>
</dbReference>
<dbReference type="GO" id="GO:0051539">
    <property type="term" value="F:4 iron, 4 sulfur cluster binding"/>
    <property type="evidence" value="ECO:0007669"/>
    <property type="project" value="UniProtKB-KW"/>
</dbReference>
<dbReference type="GO" id="GO:0016168">
    <property type="term" value="F:chlorophyll binding"/>
    <property type="evidence" value="ECO:0007669"/>
    <property type="project" value="UniProtKB-KW"/>
</dbReference>
<dbReference type="GO" id="GO:0009055">
    <property type="term" value="F:electron transfer activity"/>
    <property type="evidence" value="ECO:0007669"/>
    <property type="project" value="UniProtKB-UniRule"/>
</dbReference>
<dbReference type="GO" id="GO:0000287">
    <property type="term" value="F:magnesium ion binding"/>
    <property type="evidence" value="ECO:0007669"/>
    <property type="project" value="UniProtKB-UniRule"/>
</dbReference>
<dbReference type="GO" id="GO:0016491">
    <property type="term" value="F:oxidoreductase activity"/>
    <property type="evidence" value="ECO:0007669"/>
    <property type="project" value="UniProtKB-KW"/>
</dbReference>
<dbReference type="GO" id="GO:0015979">
    <property type="term" value="P:photosynthesis"/>
    <property type="evidence" value="ECO:0007669"/>
    <property type="project" value="UniProtKB-UniRule"/>
</dbReference>
<dbReference type="FunFam" id="1.20.1130.10:FF:000001">
    <property type="entry name" value="Photosystem I P700 chlorophyll a apoprotein A2"/>
    <property type="match status" value="1"/>
</dbReference>
<dbReference type="Gene3D" id="1.20.1130.10">
    <property type="entry name" value="Photosystem I PsaA/PsaB"/>
    <property type="match status" value="1"/>
</dbReference>
<dbReference type="HAMAP" id="MF_00482">
    <property type="entry name" value="PSI_PsaB"/>
    <property type="match status" value="1"/>
</dbReference>
<dbReference type="InterPro" id="IPR001280">
    <property type="entry name" value="PSI_PsaA/B"/>
</dbReference>
<dbReference type="InterPro" id="IPR020586">
    <property type="entry name" value="PSI_PsaA/B_CS"/>
</dbReference>
<dbReference type="InterPro" id="IPR036408">
    <property type="entry name" value="PSI_PsaA/B_sf"/>
</dbReference>
<dbReference type="InterPro" id="IPR006244">
    <property type="entry name" value="PSI_PsaB"/>
</dbReference>
<dbReference type="NCBIfam" id="TIGR01336">
    <property type="entry name" value="psaB"/>
    <property type="match status" value="1"/>
</dbReference>
<dbReference type="PANTHER" id="PTHR30128">
    <property type="entry name" value="OUTER MEMBRANE PROTEIN, OMPA-RELATED"/>
    <property type="match status" value="1"/>
</dbReference>
<dbReference type="PANTHER" id="PTHR30128:SF19">
    <property type="entry name" value="PHOTOSYSTEM I P700 CHLOROPHYLL A APOPROTEIN A1-RELATED"/>
    <property type="match status" value="1"/>
</dbReference>
<dbReference type="Pfam" id="PF00223">
    <property type="entry name" value="PsaA_PsaB"/>
    <property type="match status" value="1"/>
</dbReference>
<dbReference type="PIRSF" id="PIRSF002905">
    <property type="entry name" value="PSI_A"/>
    <property type="match status" value="1"/>
</dbReference>
<dbReference type="PRINTS" id="PR00257">
    <property type="entry name" value="PHOTSYSPSAAB"/>
</dbReference>
<dbReference type="SUPFAM" id="SSF81558">
    <property type="entry name" value="Photosystem I subunits PsaA/PsaB"/>
    <property type="match status" value="1"/>
</dbReference>
<dbReference type="PROSITE" id="PS00419">
    <property type="entry name" value="PHOTOSYSTEM_I_PSAAB"/>
    <property type="match status" value="1"/>
</dbReference>
<organism>
    <name type="scientific">Antirrhinum majus</name>
    <name type="common">Garden snapdragon</name>
    <dbReference type="NCBI Taxonomy" id="4151"/>
    <lineage>
        <taxon>Eukaryota</taxon>
        <taxon>Viridiplantae</taxon>
        <taxon>Streptophyta</taxon>
        <taxon>Embryophyta</taxon>
        <taxon>Tracheophyta</taxon>
        <taxon>Spermatophyta</taxon>
        <taxon>Magnoliopsida</taxon>
        <taxon>eudicotyledons</taxon>
        <taxon>Gunneridae</taxon>
        <taxon>Pentapetalae</taxon>
        <taxon>asterids</taxon>
        <taxon>lamiids</taxon>
        <taxon>Lamiales</taxon>
        <taxon>Plantaginaceae</taxon>
        <taxon>Antirrhineae</taxon>
        <taxon>Antirrhinum</taxon>
    </lineage>
</organism>
<geneLocation type="chloroplast"/>
<sequence length="734" mass="82420">MALRFPRFSQGLAQDPTTRRIWFGIATAHDFESHDDITEERLYQNIFASHFGQLAIIFLWTSGNLFHVAWQGNFESWVQDPLHVRPIAHAIWDPHFGQPAVEAFTRGGALGPVNIAYSGVYQWWYTIGLRTNEDLYSGALFLLFLSAISLIAGWLHLQPKWKPSVSWFKNAESRLNHHLSGLFGVSPLAWTGHLVHVAIPGSRGEYVRWNNFLDVLPHPQGLGPLFTGQWNLYAQNPDSSSHLFGTSQGAGTAILTLLGGFHPQTQSLWLTDMAHHHLAIAFIFLVAGHMYRTNFGIGHSIKDLLDAHIPPGGRLGRGHKGLYDTINNSLHFQLGLALASLGVITSLVAQHMYSLPAYAFIAQDFTTQAALYTHHQYIAGFIMTGAFAHGAIFFIRDYNPEQNQDNVLARMLDHKEAIISHLSWASLFLGFHTLGLYVHNDVMLAFGTPEKQILIEPIFAQWIQSAHGKTSYGFDVLLSSTSGPAFNAGRSIWLPGWLNAINENTNSLFLTIGPGDFLVHHAIALGLHTTTLILVKGALDARGSKLMPDKKDFGYSFPCDGPGRGGTCDISAWDAFYLAVFWMLNTIGWVTFYWHWKHITLWQGNVSQFNESSTYLMGWLRDYLWLNSSQLINGYNPFGMNSLSVWAWMFLFGHLVWATGFMFLISWRGYWQELIETLAWAHERTPLANLIRWRDKPVALSIVQARLVGLAHFSVGYIFTYAAFLIASTSGKFG</sequence>
<protein>
    <recommendedName>
        <fullName evidence="1">Photosystem I P700 chlorophyll a apoprotein A2</fullName>
        <ecNumber evidence="1">1.97.1.12</ecNumber>
    </recommendedName>
    <alternativeName>
        <fullName evidence="1">PSI-B</fullName>
    </alternativeName>
    <alternativeName>
        <fullName evidence="1">PsaB</fullName>
    </alternativeName>
</protein>
<evidence type="ECO:0000255" key="1">
    <source>
        <dbReference type="HAMAP-Rule" id="MF_00482"/>
    </source>
</evidence>
<accession>Q33332</accession>
<accession>Q33331</accession>
<name>PSAB_ANTMA</name>
<reference key="1">
    <citation type="journal article" date="1995" name="Mol. Gen. Genet.">
        <title>Detection of point mutations in chloroplast genes of Antirrhinum majus L. I. Identification of a point mutation in the psaB gene of a photosystem I plastome mutant.</title>
        <authorList>
            <person name="Schaffner C."/>
            <person name="Laasch H."/>
            <person name="Hagemann R."/>
        </authorList>
    </citation>
    <scope>NUCLEOTIDE SEQUENCE [GENOMIC DNA]</scope>
    <source>
        <strain>cv. SO</strain>
        <tissue>Leaf</tissue>
    </source>
</reference>
<proteinExistence type="inferred from homology"/>
<gene>
    <name evidence="1" type="primary">psaB</name>
</gene>
<keyword id="KW-0004">4Fe-4S</keyword>
<keyword id="KW-0148">Chlorophyll</keyword>
<keyword id="KW-0150">Chloroplast</keyword>
<keyword id="KW-0157">Chromophore</keyword>
<keyword id="KW-0249">Electron transport</keyword>
<keyword id="KW-0408">Iron</keyword>
<keyword id="KW-0411">Iron-sulfur</keyword>
<keyword id="KW-0460">Magnesium</keyword>
<keyword id="KW-0472">Membrane</keyword>
<keyword id="KW-0479">Metal-binding</keyword>
<keyword id="KW-0560">Oxidoreductase</keyword>
<keyword id="KW-0602">Photosynthesis</keyword>
<keyword id="KW-0603">Photosystem I</keyword>
<keyword id="KW-0934">Plastid</keyword>
<keyword id="KW-0793">Thylakoid</keyword>
<keyword id="KW-0812">Transmembrane</keyword>
<keyword id="KW-1133">Transmembrane helix</keyword>
<keyword id="KW-0813">Transport</keyword>
<feature type="chain" id="PRO_0000088603" description="Photosystem I P700 chlorophyll a apoprotein A2">
    <location>
        <begin position="1"/>
        <end position="734"/>
    </location>
</feature>
<feature type="transmembrane region" description="Helical; Name=I" evidence="1">
    <location>
        <begin position="46"/>
        <end position="69"/>
    </location>
</feature>
<feature type="transmembrane region" description="Helical; Name=II" evidence="1">
    <location>
        <begin position="135"/>
        <end position="158"/>
    </location>
</feature>
<feature type="transmembrane region" description="Helical; Name=III" evidence="1">
    <location>
        <begin position="175"/>
        <end position="199"/>
    </location>
</feature>
<feature type="transmembrane region" description="Helical; Name=IV" evidence="1">
    <location>
        <begin position="273"/>
        <end position="291"/>
    </location>
</feature>
<feature type="transmembrane region" description="Helical; Name=V" evidence="1">
    <location>
        <begin position="330"/>
        <end position="353"/>
    </location>
</feature>
<feature type="transmembrane region" description="Helical; Name=VI" evidence="1">
    <location>
        <begin position="369"/>
        <end position="395"/>
    </location>
</feature>
<feature type="transmembrane region" description="Helical; Name=VII" evidence="1">
    <location>
        <begin position="417"/>
        <end position="439"/>
    </location>
</feature>
<feature type="transmembrane region" description="Helical; Name=VIII" evidence="1">
    <location>
        <begin position="517"/>
        <end position="535"/>
    </location>
</feature>
<feature type="transmembrane region" description="Helical; Name=IX" evidence="1">
    <location>
        <begin position="575"/>
        <end position="596"/>
    </location>
</feature>
<feature type="transmembrane region" description="Helical; Name=X" evidence="1">
    <location>
        <begin position="643"/>
        <end position="665"/>
    </location>
</feature>
<feature type="transmembrane region" description="Helical; Name=XI" evidence="1">
    <location>
        <begin position="707"/>
        <end position="727"/>
    </location>
</feature>
<feature type="binding site" evidence="1">
    <location>
        <position position="559"/>
    </location>
    <ligand>
        <name>[4Fe-4S] cluster</name>
        <dbReference type="ChEBI" id="CHEBI:49883"/>
        <note>ligand shared between dimeric partners</note>
    </ligand>
</feature>
<feature type="binding site" evidence="1">
    <location>
        <position position="568"/>
    </location>
    <ligand>
        <name>[4Fe-4S] cluster</name>
        <dbReference type="ChEBI" id="CHEBI:49883"/>
        <note>ligand shared between dimeric partners</note>
    </ligand>
</feature>
<feature type="binding site" description="axial binding residue" evidence="1">
    <location>
        <position position="654"/>
    </location>
    <ligand>
        <name>chlorophyll a</name>
        <dbReference type="ChEBI" id="CHEBI:58416"/>
        <label>B1</label>
    </ligand>
    <ligandPart>
        <name>Mg</name>
        <dbReference type="ChEBI" id="CHEBI:25107"/>
    </ligandPart>
</feature>
<feature type="binding site" description="axial binding residue" evidence="1">
    <location>
        <position position="662"/>
    </location>
    <ligand>
        <name>chlorophyll a</name>
        <dbReference type="ChEBI" id="CHEBI:58416"/>
        <label>B3</label>
    </ligand>
    <ligandPart>
        <name>Mg</name>
        <dbReference type="ChEBI" id="CHEBI:25107"/>
    </ligandPart>
</feature>
<feature type="binding site" evidence="1">
    <location>
        <position position="670"/>
    </location>
    <ligand>
        <name>chlorophyll a</name>
        <dbReference type="ChEBI" id="CHEBI:58416"/>
        <label>B3</label>
    </ligand>
</feature>
<feature type="binding site" evidence="1">
    <location>
        <position position="671"/>
    </location>
    <ligand>
        <name>phylloquinone</name>
        <dbReference type="ChEBI" id="CHEBI:18067"/>
        <label>B</label>
    </ligand>
</feature>